<gene>
    <name evidence="1" type="primary">nuoC</name>
    <name type="ordered locus">Bxeno_A1230</name>
    <name type="ORF">Bxe_A3212</name>
</gene>
<name>NUOC_PARXL</name>
<proteinExistence type="inferred from homology"/>
<reference key="1">
    <citation type="journal article" date="2006" name="Proc. Natl. Acad. Sci. U.S.A.">
        <title>Burkholderia xenovorans LB400 harbors a multi-replicon, 9.73-Mbp genome shaped for versatility.</title>
        <authorList>
            <person name="Chain P.S.G."/>
            <person name="Denef V.J."/>
            <person name="Konstantinidis K.T."/>
            <person name="Vergez L.M."/>
            <person name="Agullo L."/>
            <person name="Reyes V.L."/>
            <person name="Hauser L."/>
            <person name="Cordova M."/>
            <person name="Gomez L."/>
            <person name="Gonzalez M."/>
            <person name="Land M."/>
            <person name="Lao V."/>
            <person name="Larimer F."/>
            <person name="LiPuma J.J."/>
            <person name="Mahenthiralingam E."/>
            <person name="Malfatti S.A."/>
            <person name="Marx C.J."/>
            <person name="Parnell J.J."/>
            <person name="Ramette A."/>
            <person name="Richardson P."/>
            <person name="Seeger M."/>
            <person name="Smith D."/>
            <person name="Spilker T."/>
            <person name="Sul W.J."/>
            <person name="Tsoi T.V."/>
            <person name="Ulrich L.E."/>
            <person name="Zhulin I.B."/>
            <person name="Tiedje J.M."/>
        </authorList>
    </citation>
    <scope>NUCLEOTIDE SEQUENCE [LARGE SCALE GENOMIC DNA]</scope>
    <source>
        <strain>LB400</strain>
    </source>
</reference>
<sequence>MASKLETLKANLEAAFGGLLQSTTEAIGELTIVVKAGDYLNVATRLRDDRSLGFEQCVDLCGVDYQTYADGAYDGPRFAAVLHLLSVQNNWRLRLRVFAPDDEVPILPSVVEIWNSVNWYEREAFDLYGIVFEGHPDLRRILTDYGFIGHPFRKDFPVSGYVEMRYDPEEKRVVYQPVTIEPREITPRVIREDRYGGLKH</sequence>
<comment type="function">
    <text evidence="1">NDH-1 shuttles electrons from NADH, via FMN and iron-sulfur (Fe-S) centers, to quinones in the respiratory chain. The immediate electron acceptor for the enzyme in this species is believed to be ubiquinone. Couples the redox reaction to proton translocation (for every two electrons transferred, four hydrogen ions are translocated across the cytoplasmic membrane), and thus conserves the redox energy in a proton gradient.</text>
</comment>
<comment type="catalytic activity">
    <reaction evidence="1">
        <text>a quinone + NADH + 5 H(+)(in) = a quinol + NAD(+) + 4 H(+)(out)</text>
        <dbReference type="Rhea" id="RHEA:57888"/>
        <dbReference type="ChEBI" id="CHEBI:15378"/>
        <dbReference type="ChEBI" id="CHEBI:24646"/>
        <dbReference type="ChEBI" id="CHEBI:57540"/>
        <dbReference type="ChEBI" id="CHEBI:57945"/>
        <dbReference type="ChEBI" id="CHEBI:132124"/>
    </reaction>
</comment>
<comment type="subunit">
    <text evidence="1">NDH-1 is composed of 14 different subunits. Subunits NuoB, C, D, E, F, and G constitute the peripheral sector of the complex.</text>
</comment>
<comment type="subcellular location">
    <subcellularLocation>
        <location evidence="1">Cell inner membrane</location>
        <topology evidence="1">Peripheral membrane protein</topology>
        <orientation evidence="1">Cytoplasmic side</orientation>
    </subcellularLocation>
</comment>
<comment type="similarity">
    <text evidence="1">Belongs to the complex I 30 kDa subunit family.</text>
</comment>
<evidence type="ECO:0000255" key="1">
    <source>
        <dbReference type="HAMAP-Rule" id="MF_01357"/>
    </source>
</evidence>
<organism>
    <name type="scientific">Paraburkholderia xenovorans (strain LB400)</name>
    <dbReference type="NCBI Taxonomy" id="266265"/>
    <lineage>
        <taxon>Bacteria</taxon>
        <taxon>Pseudomonadati</taxon>
        <taxon>Pseudomonadota</taxon>
        <taxon>Betaproteobacteria</taxon>
        <taxon>Burkholderiales</taxon>
        <taxon>Burkholderiaceae</taxon>
        <taxon>Paraburkholderia</taxon>
    </lineage>
</organism>
<keyword id="KW-0997">Cell inner membrane</keyword>
<keyword id="KW-1003">Cell membrane</keyword>
<keyword id="KW-0472">Membrane</keyword>
<keyword id="KW-0520">NAD</keyword>
<keyword id="KW-0874">Quinone</keyword>
<keyword id="KW-1185">Reference proteome</keyword>
<keyword id="KW-1278">Translocase</keyword>
<keyword id="KW-0813">Transport</keyword>
<keyword id="KW-0830">Ubiquinone</keyword>
<dbReference type="EC" id="7.1.1.-" evidence="1"/>
<dbReference type="EMBL" id="CP000270">
    <property type="protein sequence ID" value="ABE29768.1"/>
    <property type="molecule type" value="Genomic_DNA"/>
</dbReference>
<dbReference type="RefSeq" id="WP_011487494.1">
    <property type="nucleotide sequence ID" value="NC_007951.1"/>
</dbReference>
<dbReference type="SMR" id="Q142H1"/>
<dbReference type="STRING" id="266265.Bxe_A3212"/>
<dbReference type="KEGG" id="bxb:DR64_914"/>
<dbReference type="KEGG" id="bxe:Bxe_A3212"/>
<dbReference type="PATRIC" id="fig|266265.5.peg.1266"/>
<dbReference type="eggNOG" id="COG0852">
    <property type="taxonomic scope" value="Bacteria"/>
</dbReference>
<dbReference type="OrthoDB" id="9803286at2"/>
<dbReference type="Proteomes" id="UP000001817">
    <property type="component" value="Chromosome 1"/>
</dbReference>
<dbReference type="GO" id="GO:0005886">
    <property type="term" value="C:plasma membrane"/>
    <property type="evidence" value="ECO:0007669"/>
    <property type="project" value="UniProtKB-SubCell"/>
</dbReference>
<dbReference type="GO" id="GO:0008137">
    <property type="term" value="F:NADH dehydrogenase (ubiquinone) activity"/>
    <property type="evidence" value="ECO:0007669"/>
    <property type="project" value="InterPro"/>
</dbReference>
<dbReference type="GO" id="GO:0050136">
    <property type="term" value="F:NADH:ubiquinone reductase (non-electrogenic) activity"/>
    <property type="evidence" value="ECO:0007669"/>
    <property type="project" value="UniProtKB-UniRule"/>
</dbReference>
<dbReference type="GO" id="GO:0048038">
    <property type="term" value="F:quinone binding"/>
    <property type="evidence" value="ECO:0007669"/>
    <property type="project" value="UniProtKB-KW"/>
</dbReference>
<dbReference type="Gene3D" id="3.30.460.80">
    <property type="entry name" value="NADH:ubiquinone oxidoreductase, 30kDa subunit"/>
    <property type="match status" value="1"/>
</dbReference>
<dbReference type="HAMAP" id="MF_01357">
    <property type="entry name" value="NDH1_NuoC"/>
    <property type="match status" value="1"/>
</dbReference>
<dbReference type="InterPro" id="IPR010218">
    <property type="entry name" value="NADH_DH_suC"/>
</dbReference>
<dbReference type="InterPro" id="IPR037232">
    <property type="entry name" value="NADH_quin_OxRdtase_su_C/D-like"/>
</dbReference>
<dbReference type="InterPro" id="IPR001268">
    <property type="entry name" value="NADH_UbQ_OxRdtase_30kDa_su"/>
</dbReference>
<dbReference type="InterPro" id="IPR020396">
    <property type="entry name" value="NADH_UbQ_OxRdtase_CS"/>
</dbReference>
<dbReference type="NCBIfam" id="TIGR01961">
    <property type="entry name" value="NuoC_fam"/>
    <property type="match status" value="1"/>
</dbReference>
<dbReference type="NCBIfam" id="NF004730">
    <property type="entry name" value="PRK06074.1-1"/>
    <property type="match status" value="1"/>
</dbReference>
<dbReference type="PANTHER" id="PTHR10884:SF14">
    <property type="entry name" value="NADH DEHYDROGENASE [UBIQUINONE] IRON-SULFUR PROTEIN 3, MITOCHONDRIAL"/>
    <property type="match status" value="1"/>
</dbReference>
<dbReference type="PANTHER" id="PTHR10884">
    <property type="entry name" value="NADH DEHYDROGENASE UBIQUINONE IRON-SULFUR PROTEIN 3"/>
    <property type="match status" value="1"/>
</dbReference>
<dbReference type="Pfam" id="PF00329">
    <property type="entry name" value="Complex1_30kDa"/>
    <property type="match status" value="1"/>
</dbReference>
<dbReference type="SUPFAM" id="SSF143243">
    <property type="entry name" value="Nqo5-like"/>
    <property type="match status" value="1"/>
</dbReference>
<dbReference type="PROSITE" id="PS00542">
    <property type="entry name" value="COMPLEX1_30K"/>
    <property type="match status" value="1"/>
</dbReference>
<protein>
    <recommendedName>
        <fullName evidence="1">NADH-quinone oxidoreductase subunit C</fullName>
        <ecNumber evidence="1">7.1.1.-</ecNumber>
    </recommendedName>
    <alternativeName>
        <fullName evidence="1">NADH dehydrogenase I subunit C</fullName>
    </alternativeName>
    <alternativeName>
        <fullName evidence="1">NDH-1 subunit C</fullName>
    </alternativeName>
</protein>
<accession>Q142H1</accession>
<feature type="chain" id="PRO_0000358078" description="NADH-quinone oxidoreductase subunit C">
    <location>
        <begin position="1"/>
        <end position="200"/>
    </location>
</feature>